<protein>
    <recommendedName>
        <fullName evidence="1">Peptide chain release factor 1</fullName>
        <shortName evidence="1">RF-1</shortName>
    </recommendedName>
</protein>
<sequence length="354" mass="40358">MLARLKKIQQKYQNLQQDLLQNQSISNKINIFKNLSKLEPIVELFQQYLTLEEQLTNITKALNQDQIEDKEILELAQKEKETLSQQKKVLWNQLRILLLPQDPEDQKNVILEIKGAVGGNEANLFAADLLRTYMKYAESKKWKVEILNLHPSIKGGLSSVELLISGQNIYSFLKYESGVHRVQRVPATEVQGRIHTSTAIVLVLPEAKEVEIKIDWNDIRTDTFNSSGPGGQSVNTTKSAVRLSHLPSGISVACQEGKSQHENKEKAFTLLKARIYNQILNAKQEAENKHRKSLVGTGDRSEKIRTYNYPQNRITDHRIGLTLQKLDIIMEGKLDFIIEPLIDATQKEKLVQSE</sequence>
<feature type="chain" id="PRO_1000117251" description="Peptide chain release factor 1">
    <location>
        <begin position="1"/>
        <end position="354"/>
    </location>
</feature>
<feature type="modified residue" description="N5-methylglutamine" evidence="1">
    <location>
        <position position="232"/>
    </location>
</feature>
<comment type="function">
    <text evidence="1">Peptide chain release factor 1 directs the termination of translation in response to the peptide chain termination codons UAG and UAA.</text>
</comment>
<comment type="subcellular location">
    <subcellularLocation>
        <location evidence="1">Cytoplasm</location>
    </subcellularLocation>
</comment>
<comment type="PTM">
    <text evidence="1">Methylated by PrmC. Methylation increases the termination efficiency of RF1.</text>
</comment>
<comment type="similarity">
    <text evidence="1">Belongs to the prokaryotic/mitochondrial release factor family.</text>
</comment>
<organism>
    <name type="scientific">Phytoplasma australiense</name>
    <dbReference type="NCBI Taxonomy" id="59748"/>
    <lineage>
        <taxon>Bacteria</taxon>
        <taxon>Bacillati</taxon>
        <taxon>Mycoplasmatota</taxon>
        <taxon>Mollicutes</taxon>
        <taxon>Acholeplasmatales</taxon>
        <taxon>Acholeplasmataceae</taxon>
        <taxon>Candidatus Phytoplasma</taxon>
        <taxon>16SrXII (Stolbur group)</taxon>
    </lineage>
</organism>
<reference key="1">
    <citation type="journal article" date="2008" name="J. Bacteriol.">
        <title>Comparative genome analysis of 'Candidatus Phytoplasma australiense' (subgroup tuf-Australia I; rp-A) and 'Ca. Phytoplasma asteris' strains OY-M and AY-WB.</title>
        <authorList>
            <person name="Tran-Nguyen L.T."/>
            <person name="Kube M."/>
            <person name="Schneider B."/>
            <person name="Reinhardt R."/>
            <person name="Gibb K.S."/>
        </authorList>
    </citation>
    <scope>NUCLEOTIDE SEQUENCE [LARGE SCALE GENOMIC DNA]</scope>
</reference>
<keyword id="KW-0963">Cytoplasm</keyword>
<keyword id="KW-0488">Methylation</keyword>
<keyword id="KW-0648">Protein biosynthesis</keyword>
<keyword id="KW-1185">Reference proteome</keyword>
<evidence type="ECO:0000255" key="1">
    <source>
        <dbReference type="HAMAP-Rule" id="MF_00093"/>
    </source>
</evidence>
<name>RF1_PHYAS</name>
<gene>
    <name evidence="1" type="primary">prfA</name>
    <name type="ordered locus">PA0147</name>
</gene>
<dbReference type="EMBL" id="AM422018">
    <property type="protein sequence ID" value="CAM11482.1"/>
    <property type="molecule type" value="Genomic_DNA"/>
</dbReference>
<dbReference type="SMR" id="B1V950"/>
<dbReference type="STRING" id="59748.PA0147"/>
<dbReference type="KEGG" id="pal:PA0147"/>
<dbReference type="eggNOG" id="COG0216">
    <property type="taxonomic scope" value="Bacteria"/>
</dbReference>
<dbReference type="Proteomes" id="UP000008323">
    <property type="component" value="Chromosome"/>
</dbReference>
<dbReference type="GO" id="GO:0005737">
    <property type="term" value="C:cytoplasm"/>
    <property type="evidence" value="ECO:0007669"/>
    <property type="project" value="UniProtKB-SubCell"/>
</dbReference>
<dbReference type="GO" id="GO:0016149">
    <property type="term" value="F:translation release factor activity, codon specific"/>
    <property type="evidence" value="ECO:0007669"/>
    <property type="project" value="UniProtKB-UniRule"/>
</dbReference>
<dbReference type="FunFam" id="3.30.160.20:FF:000004">
    <property type="entry name" value="Peptide chain release factor 1"/>
    <property type="match status" value="1"/>
</dbReference>
<dbReference type="FunFam" id="3.30.70.1660:FF:000002">
    <property type="entry name" value="Peptide chain release factor 1"/>
    <property type="match status" value="1"/>
</dbReference>
<dbReference type="FunFam" id="3.30.70.1660:FF:000004">
    <property type="entry name" value="Peptide chain release factor 1"/>
    <property type="match status" value="1"/>
</dbReference>
<dbReference type="Gene3D" id="3.30.160.20">
    <property type="match status" value="1"/>
</dbReference>
<dbReference type="Gene3D" id="3.30.70.1660">
    <property type="match status" value="1"/>
</dbReference>
<dbReference type="Gene3D" id="6.10.140.1950">
    <property type="match status" value="1"/>
</dbReference>
<dbReference type="HAMAP" id="MF_00093">
    <property type="entry name" value="Rel_fac_1"/>
    <property type="match status" value="1"/>
</dbReference>
<dbReference type="InterPro" id="IPR005139">
    <property type="entry name" value="PCRF"/>
</dbReference>
<dbReference type="InterPro" id="IPR000352">
    <property type="entry name" value="Pep_chain_release_fac_I"/>
</dbReference>
<dbReference type="InterPro" id="IPR045853">
    <property type="entry name" value="Pep_chain_release_fac_I_sf"/>
</dbReference>
<dbReference type="InterPro" id="IPR050057">
    <property type="entry name" value="Prokaryotic/Mito_RF"/>
</dbReference>
<dbReference type="InterPro" id="IPR004373">
    <property type="entry name" value="RF-1"/>
</dbReference>
<dbReference type="NCBIfam" id="TIGR00019">
    <property type="entry name" value="prfA"/>
    <property type="match status" value="1"/>
</dbReference>
<dbReference type="NCBIfam" id="NF001859">
    <property type="entry name" value="PRK00591.1"/>
    <property type="match status" value="1"/>
</dbReference>
<dbReference type="PANTHER" id="PTHR43804">
    <property type="entry name" value="LD18447P"/>
    <property type="match status" value="1"/>
</dbReference>
<dbReference type="PANTHER" id="PTHR43804:SF7">
    <property type="entry name" value="LD18447P"/>
    <property type="match status" value="1"/>
</dbReference>
<dbReference type="Pfam" id="PF03462">
    <property type="entry name" value="PCRF"/>
    <property type="match status" value="1"/>
</dbReference>
<dbReference type="Pfam" id="PF00472">
    <property type="entry name" value="RF-1"/>
    <property type="match status" value="1"/>
</dbReference>
<dbReference type="SMART" id="SM00937">
    <property type="entry name" value="PCRF"/>
    <property type="match status" value="1"/>
</dbReference>
<dbReference type="SUPFAM" id="SSF75620">
    <property type="entry name" value="Release factor"/>
    <property type="match status" value="1"/>
</dbReference>
<proteinExistence type="inferred from homology"/>
<accession>B1V950</accession>